<comment type="function">
    <text evidence="1">Catalyzes pseudouridylation at position 35 in U2 snRNA stem-loop II region which induces particular conformation of the mRNA-U2 snRNA duplex and places the nucleophile in an accessible position for the first step of splicing. Also catalyzes pseudouridylation at position 56 in U2 snRNA. Also catalyzes pseudouridylation at position 50 in 5S rRNA, position 13 in cytoplasmic tRNAs, and position 35 in pre-tRNA(Tyr). Pseudouridine residues in tRNAs may stabilize the local RNA conformation, favor interactions with protein partners and play an important role in the stabilization of the codon-anticodon interaction with mRNA. Also catalyzes pseudouridylation of mRNAs in response to heat shock: mediates pseudouridylation of mRNAs with the consensus sequence 5'-UGUAR-3'.</text>
</comment>
<comment type="catalytic activity">
    <reaction evidence="1">
        <text>uridine in 5S rRNA = pseudouridine in 5S rRNA</text>
        <dbReference type="Rhea" id="RHEA:47036"/>
        <dbReference type="Rhea" id="RHEA-COMP:11730"/>
        <dbReference type="Rhea" id="RHEA-COMP:11731"/>
        <dbReference type="ChEBI" id="CHEBI:65314"/>
        <dbReference type="ChEBI" id="CHEBI:65315"/>
    </reaction>
</comment>
<comment type="catalytic activity">
    <reaction evidence="1">
        <text>uridine in snRNA = pseudouridine in snRNA</text>
        <dbReference type="Rhea" id="RHEA:51124"/>
        <dbReference type="Rhea" id="RHEA-COMP:12891"/>
        <dbReference type="Rhea" id="RHEA-COMP:12892"/>
        <dbReference type="ChEBI" id="CHEBI:65314"/>
        <dbReference type="ChEBI" id="CHEBI:65315"/>
    </reaction>
</comment>
<comment type="catalytic activity">
    <reaction evidence="1">
        <text>uridine(13) in tRNA = pseudouridine(13) in tRNA</text>
        <dbReference type="Rhea" id="RHEA:42540"/>
        <dbReference type="Rhea" id="RHEA-COMP:10105"/>
        <dbReference type="Rhea" id="RHEA-COMP:10106"/>
        <dbReference type="ChEBI" id="CHEBI:65314"/>
        <dbReference type="ChEBI" id="CHEBI:65315"/>
        <dbReference type="EC" id="5.4.99.27"/>
    </reaction>
</comment>
<comment type="catalytic activity">
    <reaction evidence="1">
        <text>a uridine in mRNA = a pseudouridine in mRNA</text>
        <dbReference type="Rhea" id="RHEA:56644"/>
        <dbReference type="Rhea" id="RHEA-COMP:14658"/>
        <dbReference type="Rhea" id="RHEA-COMP:14659"/>
        <dbReference type="ChEBI" id="CHEBI:65314"/>
        <dbReference type="ChEBI" id="CHEBI:65315"/>
    </reaction>
</comment>
<comment type="subcellular location">
    <subcellularLocation>
        <location evidence="1">Nucleus</location>
    </subcellularLocation>
    <subcellularLocation>
        <location evidence="1">Cytoplasm</location>
    </subcellularLocation>
</comment>
<comment type="similarity">
    <text evidence="5">Belongs to the pseudouridine synthase TruD family.</text>
</comment>
<name>PUS7_SCHPO</name>
<gene>
    <name type="primary">pus7</name>
    <name type="ORF">SPBC1A4.09</name>
</gene>
<proteinExistence type="inferred from homology"/>
<accession>O74343</accession>
<keyword id="KW-0963">Cytoplasm</keyword>
<keyword id="KW-0413">Isomerase</keyword>
<keyword id="KW-0507">mRNA processing</keyword>
<keyword id="KW-0508">mRNA splicing</keyword>
<keyword id="KW-0539">Nucleus</keyword>
<keyword id="KW-1185">Reference proteome</keyword>
<keyword id="KW-0690">Ribosome biogenesis</keyword>
<keyword id="KW-0698">rRNA processing</keyword>
<keyword id="KW-0819">tRNA processing</keyword>
<feature type="chain" id="PRO_0000152560" description="Multisubstrate pseudouridine synthase 7">
    <location>
        <begin position="1"/>
        <end position="680"/>
    </location>
</feature>
<feature type="domain" description="TRUD" evidence="3">
    <location>
        <begin position="358"/>
        <end position="596"/>
    </location>
</feature>
<feature type="region of interest" description="Disordered" evidence="4">
    <location>
        <begin position="1"/>
        <end position="42"/>
    </location>
</feature>
<feature type="region of interest" description="Disordered" evidence="4">
    <location>
        <begin position="99"/>
        <end position="136"/>
    </location>
</feature>
<feature type="region of interest" description="Disordered" evidence="4">
    <location>
        <begin position="206"/>
        <end position="229"/>
    </location>
</feature>
<feature type="compositionally biased region" description="Basic and acidic residues" evidence="4">
    <location>
        <begin position="1"/>
        <end position="30"/>
    </location>
</feature>
<feature type="compositionally biased region" description="Basic and acidic residues" evidence="4">
    <location>
        <begin position="99"/>
        <end position="116"/>
    </location>
</feature>
<feature type="compositionally biased region" description="Polar residues" evidence="4">
    <location>
        <begin position="206"/>
        <end position="216"/>
    </location>
</feature>
<feature type="active site" description="Nucleophile" evidence="2">
    <location>
        <position position="277"/>
    </location>
</feature>
<reference key="1">
    <citation type="journal article" date="2002" name="Nature">
        <title>The genome sequence of Schizosaccharomyces pombe.</title>
        <authorList>
            <person name="Wood V."/>
            <person name="Gwilliam R."/>
            <person name="Rajandream M.A."/>
            <person name="Lyne M.H."/>
            <person name="Lyne R."/>
            <person name="Stewart A."/>
            <person name="Sgouros J.G."/>
            <person name="Peat N."/>
            <person name="Hayles J."/>
            <person name="Baker S.G."/>
            <person name="Basham D."/>
            <person name="Bowman S."/>
            <person name="Brooks K."/>
            <person name="Brown D."/>
            <person name="Brown S."/>
            <person name="Chillingworth T."/>
            <person name="Churcher C.M."/>
            <person name="Collins M."/>
            <person name="Connor R."/>
            <person name="Cronin A."/>
            <person name="Davis P."/>
            <person name="Feltwell T."/>
            <person name="Fraser A."/>
            <person name="Gentles S."/>
            <person name="Goble A."/>
            <person name="Hamlin N."/>
            <person name="Harris D.E."/>
            <person name="Hidalgo J."/>
            <person name="Hodgson G."/>
            <person name="Holroyd S."/>
            <person name="Hornsby T."/>
            <person name="Howarth S."/>
            <person name="Huckle E.J."/>
            <person name="Hunt S."/>
            <person name="Jagels K."/>
            <person name="James K.D."/>
            <person name="Jones L."/>
            <person name="Jones M."/>
            <person name="Leather S."/>
            <person name="McDonald S."/>
            <person name="McLean J."/>
            <person name="Mooney P."/>
            <person name="Moule S."/>
            <person name="Mungall K.L."/>
            <person name="Murphy L.D."/>
            <person name="Niblett D."/>
            <person name="Odell C."/>
            <person name="Oliver K."/>
            <person name="O'Neil S."/>
            <person name="Pearson D."/>
            <person name="Quail M.A."/>
            <person name="Rabbinowitsch E."/>
            <person name="Rutherford K.M."/>
            <person name="Rutter S."/>
            <person name="Saunders D."/>
            <person name="Seeger K."/>
            <person name="Sharp S."/>
            <person name="Skelton J."/>
            <person name="Simmonds M.N."/>
            <person name="Squares R."/>
            <person name="Squares S."/>
            <person name="Stevens K."/>
            <person name="Taylor K."/>
            <person name="Taylor R.G."/>
            <person name="Tivey A."/>
            <person name="Walsh S.V."/>
            <person name="Warren T."/>
            <person name="Whitehead S."/>
            <person name="Woodward J.R."/>
            <person name="Volckaert G."/>
            <person name="Aert R."/>
            <person name="Robben J."/>
            <person name="Grymonprez B."/>
            <person name="Weltjens I."/>
            <person name="Vanstreels E."/>
            <person name="Rieger M."/>
            <person name="Schaefer M."/>
            <person name="Mueller-Auer S."/>
            <person name="Gabel C."/>
            <person name="Fuchs M."/>
            <person name="Duesterhoeft A."/>
            <person name="Fritzc C."/>
            <person name="Holzer E."/>
            <person name="Moestl D."/>
            <person name="Hilbert H."/>
            <person name="Borzym K."/>
            <person name="Langer I."/>
            <person name="Beck A."/>
            <person name="Lehrach H."/>
            <person name="Reinhardt R."/>
            <person name="Pohl T.M."/>
            <person name="Eger P."/>
            <person name="Zimmermann W."/>
            <person name="Wedler H."/>
            <person name="Wambutt R."/>
            <person name="Purnelle B."/>
            <person name="Goffeau A."/>
            <person name="Cadieu E."/>
            <person name="Dreano S."/>
            <person name="Gloux S."/>
            <person name="Lelaure V."/>
            <person name="Mottier S."/>
            <person name="Galibert F."/>
            <person name="Aves S.J."/>
            <person name="Xiang Z."/>
            <person name="Hunt C."/>
            <person name="Moore K."/>
            <person name="Hurst S.M."/>
            <person name="Lucas M."/>
            <person name="Rochet M."/>
            <person name="Gaillardin C."/>
            <person name="Tallada V.A."/>
            <person name="Garzon A."/>
            <person name="Thode G."/>
            <person name="Daga R.R."/>
            <person name="Cruzado L."/>
            <person name="Jimenez J."/>
            <person name="Sanchez M."/>
            <person name="del Rey F."/>
            <person name="Benito J."/>
            <person name="Dominguez A."/>
            <person name="Revuelta J.L."/>
            <person name="Moreno S."/>
            <person name="Armstrong J."/>
            <person name="Forsburg S.L."/>
            <person name="Cerutti L."/>
            <person name="Lowe T."/>
            <person name="McCombie W.R."/>
            <person name="Paulsen I."/>
            <person name="Potashkin J."/>
            <person name="Shpakovski G.V."/>
            <person name="Ussery D."/>
            <person name="Barrell B.G."/>
            <person name="Nurse P."/>
        </authorList>
    </citation>
    <scope>NUCLEOTIDE SEQUENCE [LARGE SCALE GENOMIC DNA]</scope>
    <source>
        <strain>972 / ATCC 24843</strain>
    </source>
</reference>
<dbReference type="EC" id="5.4.99.-" evidence="1"/>
<dbReference type="EC" id="5.4.99.27" evidence="1"/>
<dbReference type="EMBL" id="CU329671">
    <property type="protein sequence ID" value="CAA20114.1"/>
    <property type="molecule type" value="Genomic_DNA"/>
</dbReference>
<dbReference type="PIR" id="T39858">
    <property type="entry name" value="T39858"/>
</dbReference>
<dbReference type="RefSeq" id="NP_595812.1">
    <property type="nucleotide sequence ID" value="NM_001021715.2"/>
</dbReference>
<dbReference type="SMR" id="O74343"/>
<dbReference type="FunCoup" id="O74343">
    <property type="interactions" value="909"/>
</dbReference>
<dbReference type="STRING" id="284812.O74343"/>
<dbReference type="iPTMnet" id="O74343"/>
<dbReference type="PaxDb" id="4896-SPBC1A4.09.1"/>
<dbReference type="EnsemblFungi" id="SPBC1A4.09.1">
    <property type="protein sequence ID" value="SPBC1A4.09.1:pep"/>
    <property type="gene ID" value="SPBC1A4.09"/>
</dbReference>
<dbReference type="GeneID" id="2540668"/>
<dbReference type="KEGG" id="spo:2540668"/>
<dbReference type="PomBase" id="SPBC1A4.09">
    <property type="gene designation" value="pus7"/>
</dbReference>
<dbReference type="VEuPathDB" id="FungiDB:SPBC1A4.09"/>
<dbReference type="eggNOG" id="KOG2339">
    <property type="taxonomic scope" value="Eukaryota"/>
</dbReference>
<dbReference type="HOGENOM" id="CLU_005281_0_2_1"/>
<dbReference type="InParanoid" id="O74343"/>
<dbReference type="OMA" id="CTSHDSG"/>
<dbReference type="PhylomeDB" id="O74343"/>
<dbReference type="PRO" id="PR:O74343"/>
<dbReference type="Proteomes" id="UP000002485">
    <property type="component" value="Chromosome II"/>
</dbReference>
<dbReference type="GO" id="GO:0005737">
    <property type="term" value="C:cytoplasm"/>
    <property type="evidence" value="ECO:0007669"/>
    <property type="project" value="UniProtKB-SubCell"/>
</dbReference>
<dbReference type="GO" id="GO:0005634">
    <property type="term" value="C:nucleus"/>
    <property type="evidence" value="ECO:0007005"/>
    <property type="project" value="PomBase"/>
</dbReference>
<dbReference type="GO" id="GO:0009982">
    <property type="term" value="F:pseudouridine synthase activity"/>
    <property type="evidence" value="ECO:0000318"/>
    <property type="project" value="GO_Central"/>
</dbReference>
<dbReference type="GO" id="GO:0003723">
    <property type="term" value="F:RNA binding"/>
    <property type="evidence" value="ECO:0007669"/>
    <property type="project" value="InterPro"/>
</dbReference>
<dbReference type="GO" id="GO:0106032">
    <property type="term" value="F:snRNA pseudouridine synthase activity"/>
    <property type="evidence" value="ECO:0007669"/>
    <property type="project" value="RHEA"/>
</dbReference>
<dbReference type="GO" id="GO:0160150">
    <property type="term" value="F:tRNA pseudouridine(13) synthase activity"/>
    <property type="evidence" value="ECO:0007669"/>
    <property type="project" value="UniProtKB-EC"/>
</dbReference>
<dbReference type="GO" id="GO:0000455">
    <property type="term" value="P:enzyme-directed rRNA pseudouridine synthesis"/>
    <property type="evidence" value="ECO:0000266"/>
    <property type="project" value="PomBase"/>
</dbReference>
<dbReference type="GO" id="GO:0006397">
    <property type="term" value="P:mRNA processing"/>
    <property type="evidence" value="ECO:0007669"/>
    <property type="project" value="UniProtKB-KW"/>
</dbReference>
<dbReference type="GO" id="GO:0001522">
    <property type="term" value="P:pseudouridine synthesis"/>
    <property type="evidence" value="ECO:0000318"/>
    <property type="project" value="GO_Central"/>
</dbReference>
<dbReference type="GO" id="GO:0008380">
    <property type="term" value="P:RNA splicing"/>
    <property type="evidence" value="ECO:0007669"/>
    <property type="project" value="UniProtKB-KW"/>
</dbReference>
<dbReference type="GO" id="GO:0031120">
    <property type="term" value="P:snRNA pseudouridine synthesis"/>
    <property type="evidence" value="ECO:0000266"/>
    <property type="project" value="PomBase"/>
</dbReference>
<dbReference type="GO" id="GO:0031119">
    <property type="term" value="P:tRNA pseudouridine synthesis"/>
    <property type="evidence" value="ECO:0000266"/>
    <property type="project" value="PomBase"/>
</dbReference>
<dbReference type="CDD" id="cd02576">
    <property type="entry name" value="PseudoU_synth_ScPUS7"/>
    <property type="match status" value="1"/>
</dbReference>
<dbReference type="Gene3D" id="3.30.2350.20">
    <property type="entry name" value="TruD, catalytic domain"/>
    <property type="match status" value="2"/>
</dbReference>
<dbReference type="InterPro" id="IPR020103">
    <property type="entry name" value="PsdUridine_synth_cat_dom_sf"/>
</dbReference>
<dbReference type="InterPro" id="IPR001656">
    <property type="entry name" value="PsdUridine_synth_TruD"/>
</dbReference>
<dbReference type="InterPro" id="IPR020119">
    <property type="entry name" value="PsdUridine_synth_TruD_CS"/>
</dbReference>
<dbReference type="InterPro" id="IPR011760">
    <property type="entry name" value="PsdUridine_synth_TruD_insert"/>
</dbReference>
<dbReference type="InterPro" id="IPR042214">
    <property type="entry name" value="TruD_catalytic"/>
</dbReference>
<dbReference type="NCBIfam" id="TIGR00094">
    <property type="entry name" value="tRNA_TruD_broad"/>
    <property type="match status" value="1"/>
</dbReference>
<dbReference type="PANTHER" id="PTHR13326:SF21">
    <property type="entry name" value="PSEUDOURIDYLATE SYNTHASE PUS7L"/>
    <property type="match status" value="1"/>
</dbReference>
<dbReference type="PANTHER" id="PTHR13326">
    <property type="entry name" value="TRNA PSEUDOURIDINE SYNTHASE D"/>
    <property type="match status" value="1"/>
</dbReference>
<dbReference type="Pfam" id="PF01142">
    <property type="entry name" value="TruD"/>
    <property type="match status" value="1"/>
</dbReference>
<dbReference type="PIRSF" id="PIRSF037016">
    <property type="entry name" value="Pseudouridin_synth_euk_prd"/>
    <property type="match status" value="1"/>
</dbReference>
<dbReference type="SUPFAM" id="SSF55120">
    <property type="entry name" value="Pseudouridine synthase"/>
    <property type="match status" value="1"/>
</dbReference>
<dbReference type="PROSITE" id="PS50984">
    <property type="entry name" value="TRUD"/>
    <property type="match status" value="1"/>
</dbReference>
<dbReference type="PROSITE" id="PS01268">
    <property type="entry name" value="UPF0024"/>
    <property type="match status" value="1"/>
</dbReference>
<organism>
    <name type="scientific">Schizosaccharomyces pombe (strain 972 / ATCC 24843)</name>
    <name type="common">Fission yeast</name>
    <dbReference type="NCBI Taxonomy" id="284812"/>
    <lineage>
        <taxon>Eukaryota</taxon>
        <taxon>Fungi</taxon>
        <taxon>Dikarya</taxon>
        <taxon>Ascomycota</taxon>
        <taxon>Taphrinomycotina</taxon>
        <taxon>Schizosaccharomycetes</taxon>
        <taxon>Schizosaccharomycetales</taxon>
        <taxon>Schizosaccharomycetaceae</taxon>
        <taxon>Schizosaccharomyces</taxon>
    </lineage>
</organism>
<evidence type="ECO:0000250" key="1">
    <source>
        <dbReference type="UniProtKB" id="Q08647"/>
    </source>
</evidence>
<evidence type="ECO:0000250" key="2">
    <source>
        <dbReference type="UniProtKB" id="Q57261"/>
    </source>
</evidence>
<evidence type="ECO:0000255" key="3">
    <source>
        <dbReference type="PROSITE-ProRule" id="PRU00342"/>
    </source>
</evidence>
<evidence type="ECO:0000256" key="4">
    <source>
        <dbReference type="SAM" id="MobiDB-lite"/>
    </source>
</evidence>
<evidence type="ECO:0000305" key="5"/>
<protein>
    <recommendedName>
        <fullName>Multisubstrate pseudouridine synthase 7</fullName>
        <ecNumber evidence="1">5.4.99.-</ecNumber>
        <ecNumber evidence="1">5.4.99.27</ecNumber>
    </recommendedName>
    <alternativeName>
        <fullName>RNA pseudouridylate synthase 7</fullName>
    </alternativeName>
    <alternativeName>
        <fullName>RNA-uridine isomerase 7</fullName>
    </alternativeName>
</protein>
<sequence length="680" mass="76438">MSQENHVDVPRKRIRIDQSESSRNLERNGLEDEANAPSDLSGQKFYMTESDVGIDAFLNPNLPSIDGIIKARFTDFAVFEVDTDGNIVHLTDMEAHDPILSKATGDKETEDAKDSSNQDISNDQKAPSFKEQEPATLPILPNDLQSIIPKGIGNEFIQSLHKLSVGEITDPISLILPENTPPMDKGQRTILHQFIRNNFSGLESSTKGNGTFTVSKTTRKNQPRSRRDPRLSWKALGGEYCHFHLYKENRDSMDCLGKIARLLKVPTRTLSIAGTKDRRGVTCQRVAIHHVRASRLAQLNSGSLKNSTYGFLLGNYSYKNSNLRLGDLKGNEFHIVVRNVITPKEKVVEALNSLKEHGFINYFGLQRFGTSSVGTHTIGVRLLQSDWKGAVDLILSPRPEHTGSVKEAIDLWHSTHDAEASLRILPRRMIAESSILETWSRSGNQTDYLGAFQRIPRHLRSIYPHAYQSYVWNRVASWRIKNLGDRPVVGDLVYSTESNGLSQKSPIVDPEAPDLLEDLPVSSKLSARPIEEDEVNNFSIYDIVLPLPGRNVIYPKNETFDIYKSVMNEASLDPLNMSRKDRELSLPGDYRKLLVRPENMEFNFIKYDNMEQQLILTDKDRLENRSISVSSEVGKHTAVTLKFVLPSSAYATMALREALRTATASGDQRMLMPAVLKDSI</sequence>